<organism>
    <name type="scientific">Leifsonia xyli subsp. xyli (strain CTCB07)</name>
    <dbReference type="NCBI Taxonomy" id="281090"/>
    <lineage>
        <taxon>Bacteria</taxon>
        <taxon>Bacillati</taxon>
        <taxon>Actinomycetota</taxon>
        <taxon>Actinomycetes</taxon>
        <taxon>Micrococcales</taxon>
        <taxon>Microbacteriaceae</taxon>
        <taxon>Leifsonia</taxon>
    </lineage>
</organism>
<feature type="chain" id="PRO_0000181713" description="tRNA(Ile)-lysidine synthase">
    <location>
        <begin position="1"/>
        <end position="332"/>
    </location>
</feature>
<feature type="binding site" evidence="1">
    <location>
        <begin position="39"/>
        <end position="44"/>
    </location>
    <ligand>
        <name>ATP</name>
        <dbReference type="ChEBI" id="CHEBI:30616"/>
    </ligand>
</feature>
<dbReference type="EC" id="6.3.4.19" evidence="1"/>
<dbReference type="EMBL" id="AE016822">
    <property type="protein sequence ID" value="AAT89845.1"/>
    <property type="molecule type" value="Genomic_DNA"/>
</dbReference>
<dbReference type="SMR" id="Q6ACP8"/>
<dbReference type="STRING" id="281090.Lxx21520"/>
<dbReference type="KEGG" id="lxx:Lxx21520"/>
<dbReference type="eggNOG" id="COG0037">
    <property type="taxonomic scope" value="Bacteria"/>
</dbReference>
<dbReference type="HOGENOM" id="CLU_018869_1_0_11"/>
<dbReference type="Proteomes" id="UP000001306">
    <property type="component" value="Chromosome"/>
</dbReference>
<dbReference type="GO" id="GO:0005737">
    <property type="term" value="C:cytoplasm"/>
    <property type="evidence" value="ECO:0007669"/>
    <property type="project" value="UniProtKB-SubCell"/>
</dbReference>
<dbReference type="GO" id="GO:0005524">
    <property type="term" value="F:ATP binding"/>
    <property type="evidence" value="ECO:0007669"/>
    <property type="project" value="UniProtKB-UniRule"/>
</dbReference>
<dbReference type="GO" id="GO:0032267">
    <property type="term" value="F:tRNA(Ile)-lysidine synthase activity"/>
    <property type="evidence" value="ECO:0007669"/>
    <property type="project" value="UniProtKB-EC"/>
</dbReference>
<dbReference type="GO" id="GO:0006400">
    <property type="term" value="P:tRNA modification"/>
    <property type="evidence" value="ECO:0007669"/>
    <property type="project" value="UniProtKB-UniRule"/>
</dbReference>
<dbReference type="CDD" id="cd01992">
    <property type="entry name" value="TilS_N"/>
    <property type="match status" value="1"/>
</dbReference>
<dbReference type="Gene3D" id="1.20.59.20">
    <property type="match status" value="1"/>
</dbReference>
<dbReference type="Gene3D" id="3.40.50.620">
    <property type="entry name" value="HUPs"/>
    <property type="match status" value="1"/>
</dbReference>
<dbReference type="HAMAP" id="MF_01161">
    <property type="entry name" value="tRNA_Ile_lys_synt"/>
    <property type="match status" value="1"/>
</dbReference>
<dbReference type="InterPro" id="IPR014729">
    <property type="entry name" value="Rossmann-like_a/b/a_fold"/>
</dbReference>
<dbReference type="InterPro" id="IPR011063">
    <property type="entry name" value="TilS/TtcA_N"/>
</dbReference>
<dbReference type="InterPro" id="IPR012094">
    <property type="entry name" value="tRNA_Ile_lys_synt"/>
</dbReference>
<dbReference type="InterPro" id="IPR012795">
    <property type="entry name" value="tRNA_Ile_lys_synt_N"/>
</dbReference>
<dbReference type="InterPro" id="IPR015262">
    <property type="entry name" value="tRNA_Ile_lys_synt_subst-bd"/>
</dbReference>
<dbReference type="NCBIfam" id="TIGR02432">
    <property type="entry name" value="lysidine_TilS_N"/>
    <property type="match status" value="1"/>
</dbReference>
<dbReference type="PANTHER" id="PTHR43033">
    <property type="entry name" value="TRNA(ILE)-LYSIDINE SYNTHASE-RELATED"/>
    <property type="match status" value="1"/>
</dbReference>
<dbReference type="PANTHER" id="PTHR43033:SF1">
    <property type="entry name" value="TRNA(ILE)-LYSIDINE SYNTHASE-RELATED"/>
    <property type="match status" value="1"/>
</dbReference>
<dbReference type="Pfam" id="PF01171">
    <property type="entry name" value="ATP_bind_3"/>
    <property type="match status" value="1"/>
</dbReference>
<dbReference type="Pfam" id="PF09179">
    <property type="entry name" value="TilS"/>
    <property type="match status" value="1"/>
</dbReference>
<dbReference type="SUPFAM" id="SSF52402">
    <property type="entry name" value="Adenine nucleotide alpha hydrolases-like"/>
    <property type="match status" value="1"/>
</dbReference>
<dbReference type="SUPFAM" id="SSF82829">
    <property type="entry name" value="MesJ substrate recognition domain-like"/>
    <property type="match status" value="1"/>
</dbReference>
<comment type="function">
    <text evidence="1">Ligates lysine onto the cytidine present at position 34 of the AUA codon-specific tRNA(Ile) that contains the anticodon CAU, in an ATP-dependent manner. Cytidine is converted to lysidine, thus changing the amino acid specificity of the tRNA from methionine to isoleucine.</text>
</comment>
<comment type="catalytic activity">
    <reaction evidence="1">
        <text>cytidine(34) in tRNA(Ile2) + L-lysine + ATP = lysidine(34) in tRNA(Ile2) + AMP + diphosphate + H(+)</text>
        <dbReference type="Rhea" id="RHEA:43744"/>
        <dbReference type="Rhea" id="RHEA-COMP:10625"/>
        <dbReference type="Rhea" id="RHEA-COMP:10670"/>
        <dbReference type="ChEBI" id="CHEBI:15378"/>
        <dbReference type="ChEBI" id="CHEBI:30616"/>
        <dbReference type="ChEBI" id="CHEBI:32551"/>
        <dbReference type="ChEBI" id="CHEBI:33019"/>
        <dbReference type="ChEBI" id="CHEBI:82748"/>
        <dbReference type="ChEBI" id="CHEBI:83665"/>
        <dbReference type="ChEBI" id="CHEBI:456215"/>
        <dbReference type="EC" id="6.3.4.19"/>
    </reaction>
</comment>
<comment type="subcellular location">
    <subcellularLocation>
        <location evidence="1">Cytoplasm</location>
    </subcellularLocation>
</comment>
<comment type="domain">
    <text>The N-terminal region contains the highly conserved SGGXDS motif, predicted to be a P-loop motif involved in ATP binding.</text>
</comment>
<comment type="similarity">
    <text evidence="1">Belongs to the tRNA(Ile)-lysidine synthase family.</text>
</comment>
<name>TILS_LEIXX</name>
<gene>
    <name evidence="1" type="primary">tilS</name>
    <name type="ordered locus">Lxx21520</name>
</gene>
<sequence>MRAALAAAAALPVPDAEGDHGPARPHPLAPGALVLIGLSGGADSLALAAAAAFEAPRAGFRSGAIVVDHGLQPGSAEVAAGAACQARALGLGPVLVERVRVEAAGGPEGAARAARHTAFDSAARATAAARILLAHTLDDQAETVLLGLARGSGPSSLQGMLPDTGRLLRPFLGLRRATTRAFCADSGLEPWDDPHNDDPAYTRVRVRSAVLPVLEQELGPGVAEALARTAEQLREDDQALDSLALEGAQELVSQADDGSVALEVRGLAAGPPALRQRIIRLVVSAEFGVSLSRSHTLAVAALIADWHGQGPLSLPGVRVVRQNGLLTFHPHT</sequence>
<accession>Q6ACP8</accession>
<reference key="1">
    <citation type="journal article" date="2004" name="Mol. Plant Microbe Interact.">
        <title>The genome sequence of the Gram-positive sugarcane pathogen Leifsonia xyli subsp. xyli.</title>
        <authorList>
            <person name="Monteiro-Vitorello C.B."/>
            <person name="Camargo L.E.A."/>
            <person name="Van Sluys M.A."/>
            <person name="Kitajima J.P."/>
            <person name="Truffi D."/>
            <person name="do Amaral A.M."/>
            <person name="Harakava R."/>
            <person name="de Oliveira J.C.F."/>
            <person name="Wood D."/>
            <person name="de Oliveira M.C."/>
            <person name="Miyaki C.Y."/>
            <person name="Takita M.A."/>
            <person name="da Silva A.C.R."/>
            <person name="Furlan L.R."/>
            <person name="Carraro D.M."/>
            <person name="Camarotte G."/>
            <person name="Almeida N.F. Jr."/>
            <person name="Carrer H."/>
            <person name="Coutinho L.L."/>
            <person name="El-Dorry H.A."/>
            <person name="Ferro M.I.T."/>
            <person name="Gagliardi P.R."/>
            <person name="Giglioti E."/>
            <person name="Goldman M.H.S."/>
            <person name="Goldman G.H."/>
            <person name="Kimura E.T."/>
            <person name="Ferro E.S."/>
            <person name="Kuramae E.E."/>
            <person name="Lemos E.G.M."/>
            <person name="Lemos M.V.F."/>
            <person name="Mauro S.M.Z."/>
            <person name="Machado M.A."/>
            <person name="Marino C.L."/>
            <person name="Menck C.F."/>
            <person name="Nunes L.R."/>
            <person name="Oliveira R.C."/>
            <person name="Pereira G.G."/>
            <person name="Siqueira W."/>
            <person name="de Souza A.A."/>
            <person name="Tsai S.M."/>
            <person name="Zanca A.S."/>
            <person name="Simpson A.J.G."/>
            <person name="Brumbley S.M."/>
            <person name="Setubal J.C."/>
        </authorList>
    </citation>
    <scope>NUCLEOTIDE SEQUENCE [LARGE SCALE GENOMIC DNA]</scope>
    <source>
        <strain>CTCB07</strain>
    </source>
</reference>
<keyword id="KW-0067">ATP-binding</keyword>
<keyword id="KW-0963">Cytoplasm</keyword>
<keyword id="KW-0436">Ligase</keyword>
<keyword id="KW-0547">Nucleotide-binding</keyword>
<keyword id="KW-1185">Reference proteome</keyword>
<keyword id="KW-0819">tRNA processing</keyword>
<protein>
    <recommendedName>
        <fullName evidence="1">tRNA(Ile)-lysidine synthase</fullName>
        <ecNumber evidence="1">6.3.4.19</ecNumber>
    </recommendedName>
    <alternativeName>
        <fullName evidence="1">tRNA(Ile)-2-lysyl-cytidine synthase</fullName>
    </alternativeName>
    <alternativeName>
        <fullName evidence="1">tRNA(Ile)-lysidine synthetase</fullName>
    </alternativeName>
</protein>
<evidence type="ECO:0000255" key="1">
    <source>
        <dbReference type="HAMAP-Rule" id="MF_01161"/>
    </source>
</evidence>
<proteinExistence type="inferred from homology"/>